<keyword id="KW-0032">Aminotransferase</keyword>
<keyword id="KW-0663">Pyridoxal phosphate</keyword>
<keyword id="KW-0808">Transferase</keyword>
<accession>Q8CS41</accession>
<gene>
    <name type="primary">dat</name>
    <name type="ordered locus">SE_1423</name>
</gene>
<name>DAAA_STAES</name>
<dbReference type="EC" id="2.6.1.21"/>
<dbReference type="EMBL" id="AE015929">
    <property type="protein sequence ID" value="AAO05022.1"/>
    <property type="molecule type" value="Genomic_DNA"/>
</dbReference>
<dbReference type="RefSeq" id="NP_764978.1">
    <property type="nucleotide sequence ID" value="NC_004461.1"/>
</dbReference>
<dbReference type="RefSeq" id="WP_002484981.1">
    <property type="nucleotide sequence ID" value="NZ_WBME01000009.1"/>
</dbReference>
<dbReference type="SMR" id="Q8CS41"/>
<dbReference type="KEGG" id="sep:SE_1423"/>
<dbReference type="PATRIC" id="fig|176280.10.peg.1389"/>
<dbReference type="eggNOG" id="COG0115">
    <property type="taxonomic scope" value="Bacteria"/>
</dbReference>
<dbReference type="HOGENOM" id="CLU_020844_4_1_9"/>
<dbReference type="OrthoDB" id="9805628at2"/>
<dbReference type="Proteomes" id="UP000001411">
    <property type="component" value="Chromosome"/>
</dbReference>
<dbReference type="GO" id="GO:0005829">
    <property type="term" value="C:cytosol"/>
    <property type="evidence" value="ECO:0007669"/>
    <property type="project" value="TreeGrafter"/>
</dbReference>
<dbReference type="GO" id="GO:0047810">
    <property type="term" value="F:D-alanine-2-oxoglutarate aminotransferase activity"/>
    <property type="evidence" value="ECO:0000250"/>
    <property type="project" value="UniProtKB"/>
</dbReference>
<dbReference type="GO" id="GO:0030170">
    <property type="term" value="F:pyridoxal phosphate binding"/>
    <property type="evidence" value="ECO:0000250"/>
    <property type="project" value="UniProtKB"/>
</dbReference>
<dbReference type="GO" id="GO:0046437">
    <property type="term" value="P:D-amino acid biosynthetic process"/>
    <property type="evidence" value="ECO:0000250"/>
    <property type="project" value="UniProtKB"/>
</dbReference>
<dbReference type="GO" id="GO:0019478">
    <property type="term" value="P:D-amino acid catabolic process"/>
    <property type="evidence" value="ECO:0000250"/>
    <property type="project" value="UniProtKB"/>
</dbReference>
<dbReference type="CDD" id="cd01558">
    <property type="entry name" value="D-AAT_like"/>
    <property type="match status" value="1"/>
</dbReference>
<dbReference type="FunFam" id="3.20.10.10:FF:000002">
    <property type="entry name" value="D-alanine aminotransferase"/>
    <property type="match status" value="1"/>
</dbReference>
<dbReference type="FunFam" id="3.30.470.10:FF:000009">
    <property type="entry name" value="D-alanine aminotransferase"/>
    <property type="match status" value="1"/>
</dbReference>
<dbReference type="Gene3D" id="3.30.470.10">
    <property type="match status" value="1"/>
</dbReference>
<dbReference type="Gene3D" id="3.20.10.10">
    <property type="entry name" value="D-amino Acid Aminotransferase, subunit A, domain 2"/>
    <property type="match status" value="1"/>
</dbReference>
<dbReference type="InterPro" id="IPR001544">
    <property type="entry name" value="Aminotrans_IV"/>
</dbReference>
<dbReference type="InterPro" id="IPR018300">
    <property type="entry name" value="Aminotrans_IV_CS"/>
</dbReference>
<dbReference type="InterPro" id="IPR036038">
    <property type="entry name" value="Aminotransferase-like"/>
</dbReference>
<dbReference type="InterPro" id="IPR043132">
    <property type="entry name" value="BCAT-like_C"/>
</dbReference>
<dbReference type="InterPro" id="IPR043131">
    <property type="entry name" value="BCAT-like_N"/>
</dbReference>
<dbReference type="InterPro" id="IPR050571">
    <property type="entry name" value="Class-IV_PLP-Dep_Aminotrnsfr"/>
</dbReference>
<dbReference type="InterPro" id="IPR005784">
    <property type="entry name" value="D_amino_transT"/>
</dbReference>
<dbReference type="NCBIfam" id="TIGR01121">
    <property type="entry name" value="D_amino_aminoT"/>
    <property type="match status" value="1"/>
</dbReference>
<dbReference type="PANTHER" id="PTHR42743">
    <property type="entry name" value="AMINO-ACID AMINOTRANSFERASE"/>
    <property type="match status" value="1"/>
</dbReference>
<dbReference type="PANTHER" id="PTHR42743:SF10">
    <property type="entry name" value="D-ALANINE AMINOTRANSFERASE"/>
    <property type="match status" value="1"/>
</dbReference>
<dbReference type="Pfam" id="PF01063">
    <property type="entry name" value="Aminotran_4"/>
    <property type="match status" value="1"/>
</dbReference>
<dbReference type="SUPFAM" id="SSF56752">
    <property type="entry name" value="D-aminoacid aminotransferase-like PLP-dependent enzymes"/>
    <property type="match status" value="1"/>
</dbReference>
<dbReference type="PROSITE" id="PS00770">
    <property type="entry name" value="AA_TRANSFER_CLASS_4"/>
    <property type="match status" value="1"/>
</dbReference>
<organism>
    <name type="scientific">Staphylococcus epidermidis (strain ATCC 12228 / FDA PCI 1200)</name>
    <dbReference type="NCBI Taxonomy" id="176280"/>
    <lineage>
        <taxon>Bacteria</taxon>
        <taxon>Bacillati</taxon>
        <taxon>Bacillota</taxon>
        <taxon>Bacilli</taxon>
        <taxon>Bacillales</taxon>
        <taxon>Staphylococcaceae</taxon>
        <taxon>Staphylococcus</taxon>
    </lineage>
</organism>
<reference key="1">
    <citation type="journal article" date="2003" name="Mol. Microbiol.">
        <title>Genome-based analysis of virulence genes in a non-biofilm-forming Staphylococcus epidermidis strain (ATCC 12228).</title>
        <authorList>
            <person name="Zhang Y.-Q."/>
            <person name="Ren S.-X."/>
            <person name="Li H.-L."/>
            <person name="Wang Y.-X."/>
            <person name="Fu G."/>
            <person name="Yang J."/>
            <person name="Qin Z.-Q."/>
            <person name="Miao Y.-G."/>
            <person name="Wang W.-Y."/>
            <person name="Chen R.-S."/>
            <person name="Shen Y."/>
            <person name="Chen Z."/>
            <person name="Yuan Z.-H."/>
            <person name="Zhao G.-P."/>
            <person name="Qu D."/>
            <person name="Danchin A."/>
            <person name="Wen Y.-M."/>
        </authorList>
    </citation>
    <scope>NUCLEOTIDE SEQUENCE [LARGE SCALE GENOMIC DNA]</scope>
    <source>
        <strain>ATCC 12228 / FDA PCI 1200</strain>
    </source>
</reference>
<protein>
    <recommendedName>
        <fullName>D-alanine aminotransferase</fullName>
        <ecNumber>2.6.1.21</ecNumber>
    </recommendedName>
    <alternativeName>
        <fullName>D-amino acid aminotransferase</fullName>
    </alternativeName>
    <alternativeName>
        <fullName>D-amino acid transaminase</fullName>
        <shortName>DAAT</shortName>
    </alternativeName>
    <alternativeName>
        <fullName>D-aspartate aminotransferase</fullName>
    </alternativeName>
</protein>
<evidence type="ECO:0000250" key="1"/>
<evidence type="ECO:0000250" key="2">
    <source>
        <dbReference type="UniProtKB" id="P19938"/>
    </source>
</evidence>
<evidence type="ECO:0000305" key="3"/>
<proteinExistence type="inferred from homology"/>
<feature type="chain" id="PRO_0000103259" description="D-alanine aminotransferase">
    <location>
        <begin position="1"/>
        <end position="282"/>
    </location>
</feature>
<feature type="active site" description="Proton acceptor" evidence="2">
    <location>
        <position position="146"/>
    </location>
</feature>
<feature type="binding site" evidence="2">
    <location>
        <position position="32"/>
    </location>
    <ligand>
        <name>substrate</name>
    </ligand>
</feature>
<feature type="binding site" evidence="2">
    <location>
        <position position="51"/>
    </location>
    <ligand>
        <name>pyridoxal 5'-phosphate</name>
        <dbReference type="ChEBI" id="CHEBI:597326"/>
    </ligand>
</feature>
<feature type="binding site" evidence="2">
    <location>
        <position position="99"/>
    </location>
    <ligand>
        <name>substrate</name>
    </ligand>
</feature>
<feature type="binding site" evidence="2">
    <location>
        <position position="101"/>
    </location>
    <ligand>
        <name>substrate</name>
    </ligand>
</feature>
<feature type="binding site" evidence="2">
    <location>
        <position position="178"/>
    </location>
    <ligand>
        <name>pyridoxal 5'-phosphate</name>
        <dbReference type="ChEBI" id="CHEBI:597326"/>
    </ligand>
</feature>
<feature type="modified residue" description="N6-(pyridoxal phosphate)lysine" evidence="2">
    <location>
        <position position="146"/>
    </location>
</feature>
<comment type="function">
    <text evidence="1">Acts on the D-isomers of alanine, leucine, aspartate, glutamate, aminobutyrate, norvaline and asparagine. The enzyme transfers an amino group from a substrate D-amino acid to the pyridoxal phosphate cofactor to form pyridoxamine and an alpha-keto acid in the first half-reaction. The second half-reaction is the reverse of the first, transferring the amino group from the pyridoxamine to a second alpha-keto acid to form the product D-amino acid via a ping-pong mechanism. This is an important process in the formation of D-alanine and D-glutamate, which are essential bacterial cell wall components (By similarity).</text>
</comment>
<comment type="catalytic activity">
    <reaction>
        <text>D-alanine + 2-oxoglutarate = D-glutamate + pyruvate</text>
        <dbReference type="Rhea" id="RHEA:15869"/>
        <dbReference type="ChEBI" id="CHEBI:15361"/>
        <dbReference type="ChEBI" id="CHEBI:16810"/>
        <dbReference type="ChEBI" id="CHEBI:29986"/>
        <dbReference type="ChEBI" id="CHEBI:57416"/>
        <dbReference type="EC" id="2.6.1.21"/>
    </reaction>
</comment>
<comment type="cofactor">
    <cofactor evidence="1">
        <name>pyridoxal 5'-phosphate</name>
        <dbReference type="ChEBI" id="CHEBI:597326"/>
    </cofactor>
</comment>
<comment type="subunit">
    <text evidence="1">Homodimer.</text>
</comment>
<comment type="similarity">
    <text evidence="3">Belongs to the class-IV pyridoxal-phosphate-dependent aminotransferase family.</text>
</comment>
<sequence>MTKVFINGEFVNEEDAKVSYEDRGYVFGDGIYEYIRAYDGKLFTVKEHFERFLRSAEEIGLDLNYTIEELIELVRRLLKENNVVNGGIYIQATRGAAPRNHSFPTPPVKPVIMAFTKSYDRPYEELEQGVYAITTEDIRWLRCDIKSLNLLGNVLAKEYAVKYNAAEAIQHRGDIVTEGASSNVYAIKDGVIYTHPVNNFILNGITRRVIKWIAEDEQIPFKEEKFTVEFLKSADEVIISSTSAEVMPITKIDGENVQDGQVGTITRQLQQGFEKYIQSHSI</sequence>